<keyword id="KW-0030">Aminoacyl-tRNA synthetase</keyword>
<keyword id="KW-0067">ATP-binding</keyword>
<keyword id="KW-0963">Cytoplasm</keyword>
<keyword id="KW-0436">Ligase</keyword>
<keyword id="KW-0547">Nucleotide-binding</keyword>
<keyword id="KW-0648">Protein biosynthesis</keyword>
<keyword id="KW-1185">Reference proteome</keyword>
<gene>
    <name evidence="1" type="primary">serS</name>
    <name type="ordered locus">PP_4000</name>
</gene>
<evidence type="ECO:0000255" key="1">
    <source>
        <dbReference type="HAMAP-Rule" id="MF_00176"/>
    </source>
</evidence>
<accession>Q88FT2</accession>
<protein>
    <recommendedName>
        <fullName evidence="1">Serine--tRNA ligase</fullName>
        <ecNumber evidence="1">6.1.1.11</ecNumber>
    </recommendedName>
    <alternativeName>
        <fullName evidence="1">Seryl-tRNA synthetase</fullName>
        <shortName evidence="1">SerRS</shortName>
    </alternativeName>
    <alternativeName>
        <fullName evidence="1">Seryl-tRNA(Ser/Sec) synthetase</fullName>
    </alternativeName>
</protein>
<name>SYS_PSEPK</name>
<comment type="function">
    <text evidence="1">Catalyzes the attachment of serine to tRNA(Ser). Is also able to aminoacylate tRNA(Sec) with serine, to form the misacylated tRNA L-seryl-tRNA(Sec), which will be further converted into selenocysteinyl-tRNA(Sec).</text>
</comment>
<comment type="catalytic activity">
    <reaction evidence="1">
        <text>tRNA(Ser) + L-serine + ATP = L-seryl-tRNA(Ser) + AMP + diphosphate + H(+)</text>
        <dbReference type="Rhea" id="RHEA:12292"/>
        <dbReference type="Rhea" id="RHEA-COMP:9669"/>
        <dbReference type="Rhea" id="RHEA-COMP:9703"/>
        <dbReference type="ChEBI" id="CHEBI:15378"/>
        <dbReference type="ChEBI" id="CHEBI:30616"/>
        <dbReference type="ChEBI" id="CHEBI:33019"/>
        <dbReference type="ChEBI" id="CHEBI:33384"/>
        <dbReference type="ChEBI" id="CHEBI:78442"/>
        <dbReference type="ChEBI" id="CHEBI:78533"/>
        <dbReference type="ChEBI" id="CHEBI:456215"/>
        <dbReference type="EC" id="6.1.1.11"/>
    </reaction>
</comment>
<comment type="catalytic activity">
    <reaction evidence="1">
        <text>tRNA(Sec) + L-serine + ATP = L-seryl-tRNA(Sec) + AMP + diphosphate + H(+)</text>
        <dbReference type="Rhea" id="RHEA:42580"/>
        <dbReference type="Rhea" id="RHEA-COMP:9742"/>
        <dbReference type="Rhea" id="RHEA-COMP:10128"/>
        <dbReference type="ChEBI" id="CHEBI:15378"/>
        <dbReference type="ChEBI" id="CHEBI:30616"/>
        <dbReference type="ChEBI" id="CHEBI:33019"/>
        <dbReference type="ChEBI" id="CHEBI:33384"/>
        <dbReference type="ChEBI" id="CHEBI:78442"/>
        <dbReference type="ChEBI" id="CHEBI:78533"/>
        <dbReference type="ChEBI" id="CHEBI:456215"/>
        <dbReference type="EC" id="6.1.1.11"/>
    </reaction>
</comment>
<comment type="pathway">
    <text evidence="1">Aminoacyl-tRNA biosynthesis; selenocysteinyl-tRNA(Sec) biosynthesis; L-seryl-tRNA(Sec) from L-serine and tRNA(Sec): step 1/1.</text>
</comment>
<comment type="subunit">
    <text evidence="1">Homodimer. The tRNA molecule binds across the dimer.</text>
</comment>
<comment type="subcellular location">
    <subcellularLocation>
        <location evidence="1">Cytoplasm</location>
    </subcellularLocation>
</comment>
<comment type="domain">
    <text evidence="1">Consists of two distinct domains, a catalytic core and a N-terminal extension that is involved in tRNA binding.</text>
</comment>
<comment type="similarity">
    <text evidence="1">Belongs to the class-II aminoacyl-tRNA synthetase family. Type-1 seryl-tRNA synthetase subfamily.</text>
</comment>
<reference key="1">
    <citation type="journal article" date="2002" name="Environ. Microbiol.">
        <title>Complete genome sequence and comparative analysis of the metabolically versatile Pseudomonas putida KT2440.</title>
        <authorList>
            <person name="Nelson K.E."/>
            <person name="Weinel C."/>
            <person name="Paulsen I.T."/>
            <person name="Dodson R.J."/>
            <person name="Hilbert H."/>
            <person name="Martins dos Santos V.A.P."/>
            <person name="Fouts D.E."/>
            <person name="Gill S.R."/>
            <person name="Pop M."/>
            <person name="Holmes M."/>
            <person name="Brinkac L.M."/>
            <person name="Beanan M.J."/>
            <person name="DeBoy R.T."/>
            <person name="Daugherty S.C."/>
            <person name="Kolonay J.F."/>
            <person name="Madupu R."/>
            <person name="Nelson W.C."/>
            <person name="White O."/>
            <person name="Peterson J.D."/>
            <person name="Khouri H.M."/>
            <person name="Hance I."/>
            <person name="Chris Lee P."/>
            <person name="Holtzapple E.K."/>
            <person name="Scanlan D."/>
            <person name="Tran K."/>
            <person name="Moazzez A."/>
            <person name="Utterback T.R."/>
            <person name="Rizzo M."/>
            <person name="Lee K."/>
            <person name="Kosack D."/>
            <person name="Moestl D."/>
            <person name="Wedler H."/>
            <person name="Lauber J."/>
            <person name="Stjepandic D."/>
            <person name="Hoheisel J."/>
            <person name="Straetz M."/>
            <person name="Heim S."/>
            <person name="Kiewitz C."/>
            <person name="Eisen J.A."/>
            <person name="Timmis K.N."/>
            <person name="Duesterhoeft A."/>
            <person name="Tuemmler B."/>
            <person name="Fraser C.M."/>
        </authorList>
    </citation>
    <scope>NUCLEOTIDE SEQUENCE [LARGE SCALE GENOMIC DNA]</scope>
    <source>
        <strain>ATCC 47054 / DSM 6125 / CFBP 8728 / NCIMB 11950 / KT2440</strain>
    </source>
</reference>
<dbReference type="EC" id="6.1.1.11" evidence="1"/>
<dbReference type="EMBL" id="AE015451">
    <property type="protein sequence ID" value="AAN69594.1"/>
    <property type="molecule type" value="Genomic_DNA"/>
</dbReference>
<dbReference type="RefSeq" id="NP_746130.1">
    <property type="nucleotide sequence ID" value="NC_002947.4"/>
</dbReference>
<dbReference type="RefSeq" id="WP_010954808.1">
    <property type="nucleotide sequence ID" value="NZ_CP169744.1"/>
</dbReference>
<dbReference type="SMR" id="Q88FT2"/>
<dbReference type="STRING" id="160488.PP_4000"/>
<dbReference type="PaxDb" id="160488-PP_4000"/>
<dbReference type="GeneID" id="83679297"/>
<dbReference type="KEGG" id="ppu:PP_4000"/>
<dbReference type="PATRIC" id="fig|160488.4.peg.4256"/>
<dbReference type="eggNOG" id="COG0172">
    <property type="taxonomic scope" value="Bacteria"/>
</dbReference>
<dbReference type="HOGENOM" id="CLU_023797_1_1_6"/>
<dbReference type="OrthoDB" id="9804647at2"/>
<dbReference type="PhylomeDB" id="Q88FT2"/>
<dbReference type="BioCyc" id="PPUT160488:G1G01-4267-MONOMER"/>
<dbReference type="UniPathway" id="UPA00906">
    <property type="reaction ID" value="UER00895"/>
</dbReference>
<dbReference type="Proteomes" id="UP000000556">
    <property type="component" value="Chromosome"/>
</dbReference>
<dbReference type="GO" id="GO:0005737">
    <property type="term" value="C:cytoplasm"/>
    <property type="evidence" value="ECO:0007669"/>
    <property type="project" value="UniProtKB-SubCell"/>
</dbReference>
<dbReference type="GO" id="GO:0005524">
    <property type="term" value="F:ATP binding"/>
    <property type="evidence" value="ECO:0007669"/>
    <property type="project" value="UniProtKB-UniRule"/>
</dbReference>
<dbReference type="GO" id="GO:0004828">
    <property type="term" value="F:serine-tRNA ligase activity"/>
    <property type="evidence" value="ECO:0007669"/>
    <property type="project" value="UniProtKB-UniRule"/>
</dbReference>
<dbReference type="GO" id="GO:0016260">
    <property type="term" value="P:selenocysteine biosynthetic process"/>
    <property type="evidence" value="ECO:0007669"/>
    <property type="project" value="UniProtKB-UniRule"/>
</dbReference>
<dbReference type="GO" id="GO:0006434">
    <property type="term" value="P:seryl-tRNA aminoacylation"/>
    <property type="evidence" value="ECO:0007669"/>
    <property type="project" value="UniProtKB-UniRule"/>
</dbReference>
<dbReference type="CDD" id="cd00770">
    <property type="entry name" value="SerRS_core"/>
    <property type="match status" value="1"/>
</dbReference>
<dbReference type="Gene3D" id="3.30.930.10">
    <property type="entry name" value="Bira Bifunctional Protein, Domain 2"/>
    <property type="match status" value="1"/>
</dbReference>
<dbReference type="Gene3D" id="1.10.287.40">
    <property type="entry name" value="Serine-tRNA synthetase, tRNA binding domain"/>
    <property type="match status" value="1"/>
</dbReference>
<dbReference type="HAMAP" id="MF_00176">
    <property type="entry name" value="Ser_tRNA_synth_type1"/>
    <property type="match status" value="1"/>
</dbReference>
<dbReference type="InterPro" id="IPR002314">
    <property type="entry name" value="aa-tRNA-synt_IIb"/>
</dbReference>
<dbReference type="InterPro" id="IPR006195">
    <property type="entry name" value="aa-tRNA-synth_II"/>
</dbReference>
<dbReference type="InterPro" id="IPR045864">
    <property type="entry name" value="aa-tRNA-synth_II/BPL/LPL"/>
</dbReference>
<dbReference type="InterPro" id="IPR002317">
    <property type="entry name" value="Ser-tRNA-ligase_type_1"/>
</dbReference>
<dbReference type="InterPro" id="IPR015866">
    <property type="entry name" value="Ser-tRNA-synth_1_N"/>
</dbReference>
<dbReference type="InterPro" id="IPR042103">
    <property type="entry name" value="SerRS_1_N_sf"/>
</dbReference>
<dbReference type="InterPro" id="IPR033729">
    <property type="entry name" value="SerRS_core"/>
</dbReference>
<dbReference type="InterPro" id="IPR010978">
    <property type="entry name" value="tRNA-bd_arm"/>
</dbReference>
<dbReference type="NCBIfam" id="TIGR00414">
    <property type="entry name" value="serS"/>
    <property type="match status" value="1"/>
</dbReference>
<dbReference type="PANTHER" id="PTHR43697:SF1">
    <property type="entry name" value="SERINE--TRNA LIGASE"/>
    <property type="match status" value="1"/>
</dbReference>
<dbReference type="PANTHER" id="PTHR43697">
    <property type="entry name" value="SERYL-TRNA SYNTHETASE"/>
    <property type="match status" value="1"/>
</dbReference>
<dbReference type="Pfam" id="PF02403">
    <property type="entry name" value="Seryl_tRNA_N"/>
    <property type="match status" value="1"/>
</dbReference>
<dbReference type="Pfam" id="PF00587">
    <property type="entry name" value="tRNA-synt_2b"/>
    <property type="match status" value="1"/>
</dbReference>
<dbReference type="PIRSF" id="PIRSF001529">
    <property type="entry name" value="Ser-tRNA-synth_IIa"/>
    <property type="match status" value="1"/>
</dbReference>
<dbReference type="PRINTS" id="PR00981">
    <property type="entry name" value="TRNASYNTHSER"/>
</dbReference>
<dbReference type="SUPFAM" id="SSF55681">
    <property type="entry name" value="Class II aaRS and biotin synthetases"/>
    <property type="match status" value="1"/>
</dbReference>
<dbReference type="SUPFAM" id="SSF46589">
    <property type="entry name" value="tRNA-binding arm"/>
    <property type="match status" value="1"/>
</dbReference>
<dbReference type="PROSITE" id="PS50862">
    <property type="entry name" value="AA_TRNA_LIGASE_II"/>
    <property type="match status" value="1"/>
</dbReference>
<feature type="chain" id="PRO_0000122102" description="Serine--tRNA ligase">
    <location>
        <begin position="1"/>
        <end position="426"/>
    </location>
</feature>
<feature type="binding site" evidence="1">
    <location>
        <begin position="233"/>
        <end position="235"/>
    </location>
    <ligand>
        <name>L-serine</name>
        <dbReference type="ChEBI" id="CHEBI:33384"/>
    </ligand>
</feature>
<feature type="binding site" evidence="1">
    <location>
        <begin position="264"/>
        <end position="266"/>
    </location>
    <ligand>
        <name>ATP</name>
        <dbReference type="ChEBI" id="CHEBI:30616"/>
    </ligand>
</feature>
<feature type="binding site" evidence="1">
    <location>
        <position position="287"/>
    </location>
    <ligand>
        <name>L-serine</name>
        <dbReference type="ChEBI" id="CHEBI:33384"/>
    </ligand>
</feature>
<feature type="binding site" evidence="1">
    <location>
        <begin position="351"/>
        <end position="354"/>
    </location>
    <ligand>
        <name>ATP</name>
        <dbReference type="ChEBI" id="CHEBI:30616"/>
    </ligand>
</feature>
<feature type="binding site" evidence="1">
    <location>
        <position position="387"/>
    </location>
    <ligand>
        <name>L-serine</name>
        <dbReference type="ChEBI" id="CHEBI:33384"/>
    </ligand>
</feature>
<organism>
    <name type="scientific">Pseudomonas putida (strain ATCC 47054 / DSM 6125 / CFBP 8728 / NCIMB 11950 / KT2440)</name>
    <dbReference type="NCBI Taxonomy" id="160488"/>
    <lineage>
        <taxon>Bacteria</taxon>
        <taxon>Pseudomonadati</taxon>
        <taxon>Pseudomonadota</taxon>
        <taxon>Gammaproteobacteria</taxon>
        <taxon>Pseudomonadales</taxon>
        <taxon>Pseudomonadaceae</taxon>
        <taxon>Pseudomonas</taxon>
    </lineage>
</organism>
<sequence>MLDSKLLRGQLQEVADRLASRGFSLDVARIESLEERRKAVQTRTEQLQAERNARSKSIGQAKAKGEDIAPLMADVERMANELAAGKAELDAIQAELDGILLTIPNLPDASVPVGASEDDNVEVRRWGTPKAFDFEIKDHVALGEISGGLDFEAAAKLSGARFAVLRGPVARLHRALAQFMINLHTGEHGYEEHYTPYMVQAPALQGTGQLPKFEEDLFKITREGEADFYLIPTAEVSLTNLVAGEILDAKQLPLKLVAHTPCFRSEAGASGRDTRGMIRQHQFDKVEMVQVVEPSKSMEALEGLTANAERVLQLLELPYRVLALCTGDMGFGAVKTYDLEVWVPSQDKYREISSCSNCGDFQARRMQARWRNPETGKPELVHTLNGSGLAVGRTLVAVLENYQQADGSILVPEVLKPYMGGVEVIR</sequence>
<proteinExistence type="inferred from homology"/>